<accession>C3NGG0</accession>
<proteinExistence type="inferred from homology"/>
<sequence length="332" mass="38231">MSKLPLLPTTVIGSYPRPKWLRESIRLHKAGKISDEDLQEAFSDAVIAVLKDHYNAGVDVPTDGEVRRDEMVEFFAERIKGFKFYGPVRVWGTAYYRKPSVVSKIEYKKPMLVDEFTFAKSVSYTDNLKITITGPYTIAEWSYNEYYKNKKDLVFDLAKAINQEIKNLVEAGAKIIQIDEPALHTRREDVSWGVEAVNEAVKGVNAKLVMHICYGEYSFVAPYLNELKVDQINFAFKIYNYKPLELLKRYGFDKELGAGVIDVHNRRIETSEEVANDIRKILEYFTPEKVWINPDCGLKLLSRKIAYQKLVSMVEGTKVVREELKRKGYSVD</sequence>
<comment type="function">
    <text evidence="1">Catalyzes the transfer of a methyl group to L-homocysteine resulting in methionine formation. The physiological methyl donor is unknown.</text>
</comment>
<comment type="cofactor">
    <cofactor evidence="1">
        <name>Zn(2+)</name>
        <dbReference type="ChEBI" id="CHEBI:29105"/>
    </cofactor>
    <text evidence="1">Binds 1 zinc ion per subunit.</text>
</comment>
<comment type="pathway">
    <text evidence="1">Amino-acid biosynthesis; L-methionine biosynthesis via de novo pathway.</text>
</comment>
<comment type="similarity">
    <text evidence="1 2">Belongs to the archaeal MetE family.</text>
</comment>
<reference key="1">
    <citation type="journal article" date="2009" name="Proc. Natl. Acad. Sci. U.S.A.">
        <title>Biogeography of the Sulfolobus islandicus pan-genome.</title>
        <authorList>
            <person name="Reno M.L."/>
            <person name="Held N.L."/>
            <person name="Fields C.J."/>
            <person name="Burke P.V."/>
            <person name="Whitaker R.J."/>
        </authorList>
    </citation>
    <scope>NUCLEOTIDE SEQUENCE [LARGE SCALE GENOMIC DNA]</scope>
    <source>
        <strain>Y.N.15.51 / Yellowstone #2</strain>
    </source>
</reference>
<keyword id="KW-0028">Amino-acid biosynthesis</keyword>
<keyword id="KW-0479">Metal-binding</keyword>
<keyword id="KW-0486">Methionine biosynthesis</keyword>
<keyword id="KW-0489">Methyltransferase</keyword>
<keyword id="KW-0808">Transferase</keyword>
<keyword id="KW-0862">Zinc</keyword>
<dbReference type="EC" id="2.1.1.-" evidence="1"/>
<dbReference type="EMBL" id="CP001404">
    <property type="protein sequence ID" value="ACP48220.1"/>
    <property type="molecule type" value="Genomic_DNA"/>
</dbReference>
<dbReference type="RefSeq" id="WP_012717342.1">
    <property type="nucleotide sequence ID" value="NC_012623.1"/>
</dbReference>
<dbReference type="SMR" id="C3NGG0"/>
<dbReference type="GeneID" id="7810845"/>
<dbReference type="KEGG" id="sin:YN1551_1114"/>
<dbReference type="HOGENOM" id="CLU_040013_3_2_2"/>
<dbReference type="UniPathway" id="UPA00051"/>
<dbReference type="Proteomes" id="UP000006818">
    <property type="component" value="Chromosome"/>
</dbReference>
<dbReference type="GO" id="GO:0003871">
    <property type="term" value="F:5-methyltetrahydropteroyltriglutamate-homocysteine S-methyltransferase activity"/>
    <property type="evidence" value="ECO:0007669"/>
    <property type="project" value="InterPro"/>
</dbReference>
<dbReference type="GO" id="GO:0008270">
    <property type="term" value="F:zinc ion binding"/>
    <property type="evidence" value="ECO:0007669"/>
    <property type="project" value="InterPro"/>
</dbReference>
<dbReference type="GO" id="GO:0009086">
    <property type="term" value="P:methionine biosynthetic process"/>
    <property type="evidence" value="ECO:0007669"/>
    <property type="project" value="UniProtKB-UniRule"/>
</dbReference>
<dbReference type="GO" id="GO:0032259">
    <property type="term" value="P:methylation"/>
    <property type="evidence" value="ECO:0007669"/>
    <property type="project" value="UniProtKB-KW"/>
</dbReference>
<dbReference type="CDD" id="cd03311">
    <property type="entry name" value="CIMS_C_terminal_like"/>
    <property type="match status" value="1"/>
</dbReference>
<dbReference type="Gene3D" id="3.20.20.210">
    <property type="match status" value="1"/>
</dbReference>
<dbReference type="HAMAP" id="MF_00288">
    <property type="entry name" value="MetE"/>
    <property type="match status" value="1"/>
</dbReference>
<dbReference type="InterPro" id="IPR002629">
    <property type="entry name" value="Met_Synth_C/arc"/>
</dbReference>
<dbReference type="InterPro" id="IPR022921">
    <property type="entry name" value="MetE_arc"/>
</dbReference>
<dbReference type="InterPro" id="IPR038071">
    <property type="entry name" value="UROD/MetE-like_sf"/>
</dbReference>
<dbReference type="NCBIfam" id="NF003317">
    <property type="entry name" value="PRK04326.1"/>
    <property type="match status" value="1"/>
</dbReference>
<dbReference type="PANTHER" id="PTHR30519">
    <property type="entry name" value="5-METHYLTETRAHYDROPTEROYLTRIGLUTAMATE--HOMOCYSTEINE METHYLTRANSFERASE"/>
    <property type="match status" value="1"/>
</dbReference>
<dbReference type="Pfam" id="PF01717">
    <property type="entry name" value="Meth_synt_2"/>
    <property type="match status" value="1"/>
</dbReference>
<dbReference type="SUPFAM" id="SSF51726">
    <property type="entry name" value="UROD/MetE-like"/>
    <property type="match status" value="1"/>
</dbReference>
<organism>
    <name type="scientific">Saccharolobus islandicus (strain Y.N.15.51 / Yellowstone #2)</name>
    <name type="common">Sulfolobus islandicus</name>
    <dbReference type="NCBI Taxonomy" id="419942"/>
    <lineage>
        <taxon>Archaea</taxon>
        <taxon>Thermoproteota</taxon>
        <taxon>Thermoprotei</taxon>
        <taxon>Sulfolobales</taxon>
        <taxon>Sulfolobaceae</taxon>
        <taxon>Saccharolobus</taxon>
    </lineage>
</organism>
<name>METE_SACI1</name>
<protein>
    <recommendedName>
        <fullName evidence="1">Methionine synthase</fullName>
        <ecNumber evidence="1">2.1.1.-</ecNumber>
    </recommendedName>
    <alternativeName>
        <fullName evidence="1">Homocysteine methyltransferase</fullName>
    </alternativeName>
</protein>
<gene>
    <name evidence="1" type="primary">metE</name>
    <name type="ordered locus">YN1551_1114</name>
</gene>
<feature type="chain" id="PRO_1000204857" description="Methionine synthase">
    <location>
        <begin position="1"/>
        <end position="332"/>
    </location>
</feature>
<feature type="binding site" evidence="1">
    <location>
        <position position="211"/>
    </location>
    <ligand>
        <name>Zn(2+)</name>
        <dbReference type="ChEBI" id="CHEBI:29105"/>
        <note>catalytic</note>
    </ligand>
</feature>
<feature type="binding site" evidence="1">
    <location>
        <position position="213"/>
    </location>
    <ligand>
        <name>Zn(2+)</name>
        <dbReference type="ChEBI" id="CHEBI:29105"/>
        <note>catalytic</note>
    </ligand>
</feature>
<feature type="binding site" evidence="1">
    <location>
        <position position="296"/>
    </location>
    <ligand>
        <name>Zn(2+)</name>
        <dbReference type="ChEBI" id="CHEBI:29105"/>
        <note>catalytic</note>
    </ligand>
</feature>
<evidence type="ECO:0000255" key="1">
    <source>
        <dbReference type="HAMAP-Rule" id="MF_00288"/>
    </source>
</evidence>
<evidence type="ECO:0000305" key="2"/>